<name>ACCA_BLOPB</name>
<feature type="chain" id="PRO_0000223738" description="Acetyl-coenzyme A carboxylase carboxyl transferase subunit alpha">
    <location>
        <begin position="1"/>
        <end position="319"/>
    </location>
</feature>
<feature type="domain" description="CoA carboxyltransferase C-terminal" evidence="2">
    <location>
        <begin position="39"/>
        <end position="296"/>
    </location>
</feature>
<proteinExistence type="inferred from homology"/>
<keyword id="KW-0067">ATP-binding</keyword>
<keyword id="KW-0963">Cytoplasm</keyword>
<keyword id="KW-0275">Fatty acid biosynthesis</keyword>
<keyword id="KW-0276">Fatty acid metabolism</keyword>
<keyword id="KW-0444">Lipid biosynthesis</keyword>
<keyword id="KW-0443">Lipid metabolism</keyword>
<keyword id="KW-0547">Nucleotide-binding</keyword>
<keyword id="KW-1185">Reference proteome</keyword>
<keyword id="KW-0808">Transferase</keyword>
<reference key="1">
    <citation type="journal article" date="2005" name="Genome Res.">
        <title>Genome sequence of Blochmannia pennsylvanicus indicates parallel evolutionary trends among bacterial mutualists of insects.</title>
        <authorList>
            <person name="Degnan P.H."/>
            <person name="Lazarus A.B."/>
            <person name="Wernegreen J.J."/>
        </authorList>
    </citation>
    <scope>NUCLEOTIDE SEQUENCE [LARGE SCALE GENOMIC DNA]</scope>
    <source>
        <strain>BPEN</strain>
    </source>
</reference>
<evidence type="ECO:0000255" key="1">
    <source>
        <dbReference type="HAMAP-Rule" id="MF_00823"/>
    </source>
</evidence>
<evidence type="ECO:0000255" key="2">
    <source>
        <dbReference type="PROSITE-ProRule" id="PRU01137"/>
    </source>
</evidence>
<organism>
    <name type="scientific">Blochmanniella pennsylvanica (strain BPEN)</name>
    <dbReference type="NCBI Taxonomy" id="291272"/>
    <lineage>
        <taxon>Bacteria</taxon>
        <taxon>Pseudomonadati</taxon>
        <taxon>Pseudomonadota</taxon>
        <taxon>Gammaproteobacteria</taxon>
        <taxon>Enterobacterales</taxon>
        <taxon>Enterobacteriaceae</taxon>
        <taxon>ant endosymbionts</taxon>
        <taxon>Candidatus Blochmanniella</taxon>
    </lineage>
</organism>
<dbReference type="EC" id="2.1.3.15" evidence="1"/>
<dbReference type="EMBL" id="CP000016">
    <property type="protein sequence ID" value="AAZ40926.1"/>
    <property type="molecule type" value="Genomic_DNA"/>
</dbReference>
<dbReference type="RefSeq" id="WP_011282833.1">
    <property type="nucleotide sequence ID" value="NC_007292.1"/>
</dbReference>
<dbReference type="SMR" id="Q493B6"/>
<dbReference type="STRING" id="291272.BPEN_295"/>
<dbReference type="KEGG" id="bpn:BPEN_295"/>
<dbReference type="eggNOG" id="COG0825">
    <property type="taxonomic scope" value="Bacteria"/>
</dbReference>
<dbReference type="HOGENOM" id="CLU_015486_0_2_6"/>
<dbReference type="OrthoDB" id="9808023at2"/>
<dbReference type="UniPathway" id="UPA00655">
    <property type="reaction ID" value="UER00711"/>
</dbReference>
<dbReference type="Proteomes" id="UP000007794">
    <property type="component" value="Chromosome"/>
</dbReference>
<dbReference type="GO" id="GO:0009317">
    <property type="term" value="C:acetyl-CoA carboxylase complex"/>
    <property type="evidence" value="ECO:0007669"/>
    <property type="project" value="InterPro"/>
</dbReference>
<dbReference type="GO" id="GO:0003989">
    <property type="term" value="F:acetyl-CoA carboxylase activity"/>
    <property type="evidence" value="ECO:0007669"/>
    <property type="project" value="InterPro"/>
</dbReference>
<dbReference type="GO" id="GO:0005524">
    <property type="term" value="F:ATP binding"/>
    <property type="evidence" value="ECO:0007669"/>
    <property type="project" value="UniProtKB-KW"/>
</dbReference>
<dbReference type="GO" id="GO:0016743">
    <property type="term" value="F:carboxyl- or carbamoyltransferase activity"/>
    <property type="evidence" value="ECO:0007669"/>
    <property type="project" value="UniProtKB-UniRule"/>
</dbReference>
<dbReference type="GO" id="GO:0006633">
    <property type="term" value="P:fatty acid biosynthetic process"/>
    <property type="evidence" value="ECO:0007669"/>
    <property type="project" value="UniProtKB-KW"/>
</dbReference>
<dbReference type="GO" id="GO:2001295">
    <property type="term" value="P:malonyl-CoA biosynthetic process"/>
    <property type="evidence" value="ECO:0007669"/>
    <property type="project" value="UniProtKB-UniRule"/>
</dbReference>
<dbReference type="FunFam" id="3.90.226.10:FF:000008">
    <property type="entry name" value="Acetyl-coenzyme A carboxylase carboxyl transferase subunit alpha"/>
    <property type="match status" value="1"/>
</dbReference>
<dbReference type="Gene3D" id="3.90.226.10">
    <property type="entry name" value="2-enoyl-CoA Hydratase, Chain A, domain 1"/>
    <property type="match status" value="1"/>
</dbReference>
<dbReference type="HAMAP" id="MF_00823">
    <property type="entry name" value="AcetylCoA_CT_alpha"/>
    <property type="match status" value="1"/>
</dbReference>
<dbReference type="InterPro" id="IPR001095">
    <property type="entry name" value="Acetyl_CoA_COase_a_su"/>
</dbReference>
<dbReference type="InterPro" id="IPR029045">
    <property type="entry name" value="ClpP/crotonase-like_dom_sf"/>
</dbReference>
<dbReference type="InterPro" id="IPR011763">
    <property type="entry name" value="COA_CT_C"/>
</dbReference>
<dbReference type="NCBIfam" id="TIGR00513">
    <property type="entry name" value="accA"/>
    <property type="match status" value="1"/>
</dbReference>
<dbReference type="NCBIfam" id="NF041504">
    <property type="entry name" value="AccA_sub"/>
    <property type="match status" value="1"/>
</dbReference>
<dbReference type="NCBIfam" id="NF004344">
    <property type="entry name" value="PRK05724.1"/>
    <property type="match status" value="1"/>
</dbReference>
<dbReference type="PANTHER" id="PTHR42853">
    <property type="entry name" value="ACETYL-COENZYME A CARBOXYLASE CARBOXYL TRANSFERASE SUBUNIT ALPHA"/>
    <property type="match status" value="1"/>
</dbReference>
<dbReference type="PANTHER" id="PTHR42853:SF3">
    <property type="entry name" value="ACETYL-COENZYME A CARBOXYLASE CARBOXYL TRANSFERASE SUBUNIT ALPHA, CHLOROPLASTIC"/>
    <property type="match status" value="1"/>
</dbReference>
<dbReference type="Pfam" id="PF03255">
    <property type="entry name" value="ACCA"/>
    <property type="match status" value="1"/>
</dbReference>
<dbReference type="PRINTS" id="PR01069">
    <property type="entry name" value="ACCCTRFRASEA"/>
</dbReference>
<dbReference type="SUPFAM" id="SSF52096">
    <property type="entry name" value="ClpP/crotonase"/>
    <property type="match status" value="1"/>
</dbReference>
<dbReference type="PROSITE" id="PS50989">
    <property type="entry name" value="COA_CT_CTER"/>
    <property type="match status" value="1"/>
</dbReference>
<gene>
    <name evidence="1" type="primary">accA</name>
    <name type="ordered locus">BPEN_295</name>
</gene>
<comment type="function">
    <text evidence="1">Component of the acetyl coenzyme A carboxylase (ACC) complex. First, biotin carboxylase catalyzes the carboxylation of biotin on its carrier protein (BCCP) and then the CO(2) group is transferred by the carboxyltransferase to acetyl-CoA to form malonyl-CoA.</text>
</comment>
<comment type="catalytic activity">
    <reaction evidence="1">
        <text>N(6)-carboxybiotinyl-L-lysyl-[protein] + acetyl-CoA = N(6)-biotinyl-L-lysyl-[protein] + malonyl-CoA</text>
        <dbReference type="Rhea" id="RHEA:54728"/>
        <dbReference type="Rhea" id="RHEA-COMP:10505"/>
        <dbReference type="Rhea" id="RHEA-COMP:10506"/>
        <dbReference type="ChEBI" id="CHEBI:57288"/>
        <dbReference type="ChEBI" id="CHEBI:57384"/>
        <dbReference type="ChEBI" id="CHEBI:83144"/>
        <dbReference type="ChEBI" id="CHEBI:83145"/>
        <dbReference type="EC" id="2.1.3.15"/>
    </reaction>
</comment>
<comment type="pathway">
    <text evidence="1">Lipid metabolism; malonyl-CoA biosynthesis; malonyl-CoA from acetyl-CoA: step 1/1.</text>
</comment>
<comment type="subunit">
    <text evidence="1">Acetyl-CoA carboxylase is a heterohexamer composed of biotin carboxyl carrier protein (AccB), biotin carboxylase (AccC) and two subunits each of ACCase subunit alpha (AccA) and ACCase subunit beta (AccD).</text>
</comment>
<comment type="subcellular location">
    <subcellularLocation>
        <location evidence="1">Cytoplasm</location>
    </subcellularLocation>
</comment>
<comment type="similarity">
    <text evidence="1">Belongs to the AccA family.</text>
</comment>
<sequence>MGLNVLDFEKPILDLEEKINSLTSIVHSDKKSKKNVNAEINRLRSKSIELTQKIFSNLNAWQVAQLARHPRRPYTLDYIERIFNDFDELSGDRVYADDKAIVGGIARLNSRPVMIIGHQKGRDTKEKIKRNFGMSAPEGYRKALRLMKMAERFKIPLITFIDTPGAYPGVGAEKRGQSAAIAKNLRTMSILKIPIICTVIGEGGSGGALAISVGDKVNMLEYSTYSVISPEGCASILWKNVKKAPIAAEAMGITAYRLKELNLIDSVISEPLGGAHRDILTTSISLKTQLLLDLTELDSFDEKELLNRRYQRLMHYGYC</sequence>
<accession>Q493B6</accession>
<protein>
    <recommendedName>
        <fullName evidence="1">Acetyl-coenzyme A carboxylase carboxyl transferase subunit alpha</fullName>
        <shortName evidence="1">ACCase subunit alpha</shortName>
        <shortName evidence="1">Acetyl-CoA carboxylase carboxyltransferase subunit alpha</shortName>
        <ecNumber evidence="1">2.1.3.15</ecNumber>
    </recommendedName>
</protein>